<keyword id="KW-1015">Disulfide bond</keyword>
<keyword id="KW-0274">FAD</keyword>
<keyword id="KW-0285">Flavoprotein</keyword>
<keyword id="KW-0325">Glycoprotein</keyword>
<keyword id="KW-0521">NADP</keyword>
<keyword id="KW-0560">Oxidoreductase</keyword>
<keyword id="KW-0676">Redox-active center</keyword>
<keyword id="KW-1185">Reference proteome</keyword>
<keyword id="KW-0964">Secreted</keyword>
<keyword id="KW-0732">Signal</keyword>
<feature type="signal peptide" evidence="2">
    <location>
        <begin position="1"/>
        <end position="22"/>
    </location>
</feature>
<feature type="chain" id="PRO_0000434676" description="Probable thioredoxin reductase ARB_06224" evidence="2">
    <location>
        <begin position="23"/>
        <end position="404"/>
    </location>
</feature>
<feature type="binding site" evidence="1">
    <location>
        <begin position="67"/>
        <end position="75"/>
    </location>
    <ligand>
        <name>FAD</name>
        <dbReference type="ChEBI" id="CHEBI:57692"/>
    </ligand>
</feature>
<feature type="binding site" evidence="1">
    <location>
        <begin position="334"/>
        <end position="343"/>
    </location>
    <ligand>
        <name>FAD</name>
        <dbReference type="ChEBI" id="CHEBI:57692"/>
    </ligand>
</feature>
<feature type="glycosylation site" description="N-linked (GlcNAc...) asparagine" evidence="3">
    <location>
        <position position="213"/>
    </location>
</feature>
<feature type="disulfide bond" description="Redox-active" evidence="1">
    <location>
        <begin position="172"/>
        <end position="175"/>
    </location>
</feature>
<gene>
    <name type="ORF">ARB_06224</name>
</gene>
<proteinExistence type="evidence at protein level"/>
<comment type="catalytic activity">
    <reaction evidence="1">
        <text>[thioredoxin]-dithiol + NADP(+) = [thioredoxin]-disulfide + NADPH + H(+)</text>
        <dbReference type="Rhea" id="RHEA:20345"/>
        <dbReference type="Rhea" id="RHEA-COMP:10698"/>
        <dbReference type="Rhea" id="RHEA-COMP:10700"/>
        <dbReference type="ChEBI" id="CHEBI:15378"/>
        <dbReference type="ChEBI" id="CHEBI:29950"/>
        <dbReference type="ChEBI" id="CHEBI:50058"/>
        <dbReference type="ChEBI" id="CHEBI:57783"/>
        <dbReference type="ChEBI" id="CHEBI:58349"/>
        <dbReference type="EC" id="1.8.1.9"/>
    </reaction>
</comment>
<comment type="cofactor">
    <cofactor evidence="1">
        <name>FAD</name>
        <dbReference type="ChEBI" id="CHEBI:57692"/>
    </cofactor>
    <text evidence="1">Binds 1 FAD per subunit.</text>
</comment>
<comment type="subunit">
    <text evidence="1">Homodimer.</text>
</comment>
<comment type="subcellular location">
    <subcellularLocation>
        <location evidence="4">Secreted</location>
    </subcellularLocation>
</comment>
<comment type="similarity">
    <text evidence="5">Belongs to the class-II pyridine nucleotide-disulfide oxidoreductase family.</text>
</comment>
<sequence length="404" mass="45299">MGVQRLALALIAFTSALTSVIAAPIVIEQPPLGPEHRYDAIVIGGGPSGLSALSSLGRVRRHVLLFDEGIYRNGATRHIHDMLTNDGVEPKVFRAKARQQISRYTSTSIKDVKVTKIKKVFEHGGRKYFFQVTDKTGAMYTASKVVLGTGVLDVLPGTPGLQENFGKGIYWCPWCDGWEHRDQPLGILGPLRHVMDSVYELETLNNDIIAFVNGTEHSVEDILYLNRKYPHWRQQLKHYNVQINNKMVSSIDRLQDGSKHQDKKTWQEFDKFRVNFNDGTSVERSVFITNFPTEQHSDLPDQLGLARDPIHKNKIKVNFKGMRASVPGVFVVGDANNDGSTNGNHAMFSGKRAAVALHVELEQERAEAALGKRDESFSAEQVENEALKLIGRDTEELEELWGRK</sequence>
<organism>
    <name type="scientific">Arthroderma benhamiae (strain ATCC MYA-4681 / CBS 112371)</name>
    <name type="common">Trichophyton mentagrophytes</name>
    <dbReference type="NCBI Taxonomy" id="663331"/>
    <lineage>
        <taxon>Eukaryota</taxon>
        <taxon>Fungi</taxon>
        <taxon>Dikarya</taxon>
        <taxon>Ascomycota</taxon>
        <taxon>Pezizomycotina</taxon>
        <taxon>Eurotiomycetes</taxon>
        <taxon>Eurotiomycetidae</taxon>
        <taxon>Onygenales</taxon>
        <taxon>Arthrodermataceae</taxon>
        <taxon>Trichophyton</taxon>
    </lineage>
</organism>
<accession>D4APQ6</accession>
<dbReference type="EC" id="1.8.1.9" evidence="1"/>
<dbReference type="EMBL" id="ABSU01000004">
    <property type="protein sequence ID" value="EFE35267.1"/>
    <property type="molecule type" value="Genomic_DNA"/>
</dbReference>
<dbReference type="RefSeq" id="XP_003015912.1">
    <property type="nucleotide sequence ID" value="XM_003015866.1"/>
</dbReference>
<dbReference type="SMR" id="D4APQ6"/>
<dbReference type="STRING" id="663331.D4APQ6"/>
<dbReference type="GeneID" id="9523739"/>
<dbReference type="KEGG" id="abe:ARB_06224"/>
<dbReference type="eggNOG" id="ENOG502S4MV">
    <property type="taxonomic scope" value="Eukaryota"/>
</dbReference>
<dbReference type="HOGENOM" id="CLU_031864_5_0_1"/>
<dbReference type="OMA" id="AAIWIHK"/>
<dbReference type="OrthoDB" id="10260355at2759"/>
<dbReference type="Proteomes" id="UP000008866">
    <property type="component" value="Unassembled WGS sequence"/>
</dbReference>
<dbReference type="GO" id="GO:0005576">
    <property type="term" value="C:extracellular region"/>
    <property type="evidence" value="ECO:0007669"/>
    <property type="project" value="UniProtKB-SubCell"/>
</dbReference>
<dbReference type="GO" id="GO:0004791">
    <property type="term" value="F:thioredoxin-disulfide reductase (NADPH) activity"/>
    <property type="evidence" value="ECO:0007669"/>
    <property type="project" value="UniProtKB-EC"/>
</dbReference>
<dbReference type="Gene3D" id="3.50.50.60">
    <property type="entry name" value="FAD/NAD(P)-binding domain"/>
    <property type="match status" value="2"/>
</dbReference>
<dbReference type="InterPro" id="IPR036188">
    <property type="entry name" value="FAD/NAD-bd_sf"/>
</dbReference>
<dbReference type="InterPro" id="IPR023753">
    <property type="entry name" value="FAD/NAD-binding_dom"/>
</dbReference>
<dbReference type="InterPro" id="IPR050097">
    <property type="entry name" value="Ferredoxin-NADP_redctase_2"/>
</dbReference>
<dbReference type="PANTHER" id="PTHR48105">
    <property type="entry name" value="THIOREDOXIN REDUCTASE 1-RELATED-RELATED"/>
    <property type="match status" value="1"/>
</dbReference>
<dbReference type="Pfam" id="PF07992">
    <property type="entry name" value="Pyr_redox_2"/>
    <property type="match status" value="1"/>
</dbReference>
<dbReference type="PRINTS" id="PR00368">
    <property type="entry name" value="FADPNR"/>
</dbReference>
<dbReference type="PRINTS" id="PR00469">
    <property type="entry name" value="PNDRDTASEII"/>
</dbReference>
<dbReference type="SUPFAM" id="SSF51905">
    <property type="entry name" value="FAD/NAD(P)-binding domain"/>
    <property type="match status" value="1"/>
</dbReference>
<protein>
    <recommendedName>
        <fullName evidence="5">Probable thioredoxin reductase ARB_06224</fullName>
        <ecNumber evidence="1">1.8.1.9</ecNumber>
    </recommendedName>
</protein>
<name>TRXR_ARTBC</name>
<evidence type="ECO:0000250" key="1">
    <source>
        <dbReference type="UniProtKB" id="P0A9P4"/>
    </source>
</evidence>
<evidence type="ECO:0000255" key="2"/>
<evidence type="ECO:0000255" key="3">
    <source>
        <dbReference type="PROSITE-ProRule" id="PRU00498"/>
    </source>
</evidence>
<evidence type="ECO:0000269" key="4">
    <source>
    </source>
</evidence>
<evidence type="ECO:0000305" key="5"/>
<reference key="1">
    <citation type="journal article" date="2011" name="Genome Biol.">
        <title>Comparative and functional genomics provide insights into the pathogenicity of dermatophytic fungi.</title>
        <authorList>
            <person name="Burmester A."/>
            <person name="Shelest E."/>
            <person name="Gloeckner G."/>
            <person name="Heddergott C."/>
            <person name="Schindler S."/>
            <person name="Staib P."/>
            <person name="Heidel A."/>
            <person name="Felder M."/>
            <person name="Petzold A."/>
            <person name="Szafranski K."/>
            <person name="Feuermann M."/>
            <person name="Pedruzzi I."/>
            <person name="Priebe S."/>
            <person name="Groth M."/>
            <person name="Winkler R."/>
            <person name="Li W."/>
            <person name="Kniemeyer O."/>
            <person name="Schroeckh V."/>
            <person name="Hertweck C."/>
            <person name="Hube B."/>
            <person name="White T.C."/>
            <person name="Platzer M."/>
            <person name="Guthke R."/>
            <person name="Heitman J."/>
            <person name="Woestemeyer J."/>
            <person name="Zipfel P.F."/>
            <person name="Monod M."/>
            <person name="Brakhage A.A."/>
        </authorList>
    </citation>
    <scope>NUCLEOTIDE SEQUENCE [LARGE SCALE GENOMIC DNA]</scope>
    <source>
        <strain>ATCC MYA-4681 / CBS 112371</strain>
    </source>
</reference>
<reference key="2">
    <citation type="journal article" date="2011" name="Proteomics">
        <title>Identification of novel secreted proteases during extracellular proteolysis by dermatophytes at acidic pH.</title>
        <authorList>
            <person name="Sriranganadane D."/>
            <person name="Waridel P."/>
            <person name="Salamin K."/>
            <person name="Feuermann M."/>
            <person name="Mignon B."/>
            <person name="Staib P."/>
            <person name="Neuhaus J.M."/>
            <person name="Quadroni M."/>
            <person name="Monod M."/>
        </authorList>
    </citation>
    <scope>IDENTIFICATION BY MASS SPECTROMETRY</scope>
    <scope>SUBCELLULAR LOCATION</scope>
</reference>